<sequence>MEESETKGRISQETDKACVSVERIGSTLLSSFVKKGKEVSNKRNSKQNKRKAEEELCSKSRTKKYSRGWVRCEEMEEEKVKKTRKRKSKRQQKDNKVEVDDSLRLQRRTRYLLIKMKMQQNLIDAYATEGWKGQSREKIRPDKELERARKEILNCKLGLRDAIRQLDLLSSVGSMEEKVIASDGSIHHDHIFCAECNSREAFPDNDIILCDGTCNRAFHQKCLDPPLETESIPPGDQGWFCKFCDCKIEIIDTMNAQIGTHFPVDSNWQDIFNEEASLPIGSEATVNNEADWPSDDSKDDDYDPEMRENGGGNSSNVSGDGGGDNDEESISTSLSLSSDGVALSTGSWEGHRLSNMVEQCETSNEETVCGPRQRRTVDYTQLYYEMFGKDAVLQEQGSEDEDWGPNDRRKRKRESDAGSTLVTMCESSKKDQDVVETLEQSERDSVSVENKGGRRRMFRLPRNAVEKLRQVFAETELPSKAVRDRLAKELSLDPEKVNKWFKNTRYMALRNRKTESVKQPGDSKTVSGGDSGPEAVMENNTETNEVQDTLDDTVPPGFDATNQNILSPCNNNQEEFQQENVSFPSPTDESQQYLEQNDSSFVLVPHEKQSSEISLKTAVEENETESKMMKEPHEELSSEMSLKTAAEEKETESKMIEEPHEELSREMSLKTAVEEKETESKMMEEPHDELNSEMSLSTAVEEKETGSKMTEESHEELSNEMSLEEKETGRKMTEEEELEAVMEMLCRTENKLLDVTQRLDRFKTPKGRKKLGNSSSPLLEEDSVVYVPIAEIKEKR</sequence>
<accession>P48785</accession>
<keyword id="KW-0025">Alternative splicing</keyword>
<keyword id="KW-0238">DNA-binding</keyword>
<keyword id="KW-0371">Homeobox</keyword>
<keyword id="KW-0479">Metal-binding</keyword>
<keyword id="KW-0539">Nucleus</keyword>
<keyword id="KW-0611">Plant defense</keyword>
<keyword id="KW-1185">Reference proteome</keyword>
<keyword id="KW-0677">Repeat</keyword>
<keyword id="KW-0804">Transcription</keyword>
<keyword id="KW-0805">Transcription regulation</keyword>
<keyword id="KW-0862">Zinc</keyword>
<keyword id="KW-0863">Zinc-finger</keyword>
<protein>
    <recommendedName>
        <fullName>Pathogenesis-related homeodomain protein</fullName>
        <shortName>PRHA</shortName>
    </recommendedName>
</protein>
<comment type="function">
    <text>Specifically binds to the fungal elicitor-responsive DNA element, 5'-CTAATTGTTTA-3', of the gene PR2 promoter.</text>
</comment>
<comment type="subcellular location">
    <subcellularLocation>
        <location>Nucleus</location>
    </subcellularLocation>
</comment>
<comment type="alternative products">
    <event type="alternative splicing"/>
    <isoform>
        <id>P48785-1</id>
        <name>1</name>
        <sequence type="displayed"/>
    </isoform>
    <text>A number of isoforms are produced. According to EST sequences.</text>
</comment>
<comment type="induction">
    <text>By pathogen infection.</text>
</comment>
<comment type="similarity">
    <text evidence="4">Belongs to the PHD-associated homeobox family.</text>
</comment>
<feature type="chain" id="PRO_0000049264" description="Pathogenesis-related homeodomain protein">
    <location>
        <begin position="1"/>
        <end position="796"/>
    </location>
</feature>
<feature type="repeat" description="1">
    <location>
        <begin position="605"/>
        <end position="631"/>
    </location>
</feature>
<feature type="repeat" description="2">
    <location>
        <begin position="632"/>
        <end position="658"/>
    </location>
</feature>
<feature type="repeat" description="3">
    <location>
        <begin position="659"/>
        <end position="685"/>
    </location>
</feature>
<feature type="repeat" description="4">
    <location>
        <begin position="686"/>
        <end position="712"/>
    </location>
</feature>
<feature type="repeat" description="5; truncated">
    <location>
        <begin position="713"/>
        <end position="735"/>
    </location>
</feature>
<feature type="zinc finger region" description="PHD-type" evidence="2">
    <location>
        <begin position="190"/>
        <end position="247"/>
    </location>
</feature>
<feature type="DNA-binding region" description="Homeobox" evidence="1">
    <location>
        <begin position="452"/>
        <end position="511"/>
    </location>
</feature>
<feature type="region of interest" description="Disordered" evidence="3">
    <location>
        <begin position="34"/>
        <end position="57"/>
    </location>
</feature>
<feature type="region of interest" description="Disordered" evidence="3">
    <location>
        <begin position="80"/>
        <end position="99"/>
    </location>
</feature>
<feature type="region of interest" description="Disordered" evidence="3">
    <location>
        <begin position="282"/>
        <end position="347"/>
    </location>
</feature>
<feature type="region of interest" description="Disordered" evidence="3">
    <location>
        <begin position="393"/>
        <end position="422"/>
    </location>
</feature>
<feature type="region of interest" description="Disordered" evidence="3">
    <location>
        <begin position="511"/>
        <end position="736"/>
    </location>
</feature>
<feature type="region of interest" description="5 X 27 AA tandem repeats">
    <location>
        <begin position="605"/>
        <end position="735"/>
    </location>
</feature>
<feature type="region of interest" description="Leucine-zipper">
    <location>
        <begin position="738"/>
        <end position="759"/>
    </location>
</feature>
<feature type="compositionally biased region" description="Basic residues" evidence="3">
    <location>
        <begin position="81"/>
        <end position="90"/>
    </location>
</feature>
<feature type="compositionally biased region" description="Acidic residues" evidence="3">
    <location>
        <begin position="292"/>
        <end position="303"/>
    </location>
</feature>
<feature type="compositionally biased region" description="Polar residues" evidence="3">
    <location>
        <begin position="538"/>
        <end position="547"/>
    </location>
</feature>
<feature type="compositionally biased region" description="Polar residues" evidence="3">
    <location>
        <begin position="560"/>
        <end position="569"/>
    </location>
</feature>
<feature type="compositionally biased region" description="Low complexity" evidence="3">
    <location>
        <begin position="570"/>
        <end position="580"/>
    </location>
</feature>
<feature type="compositionally biased region" description="Polar residues" evidence="3">
    <location>
        <begin position="581"/>
        <end position="600"/>
    </location>
</feature>
<feature type="compositionally biased region" description="Basic and acidic residues" evidence="3">
    <location>
        <begin position="624"/>
        <end position="636"/>
    </location>
</feature>
<feature type="compositionally biased region" description="Basic and acidic residues" evidence="3">
    <location>
        <begin position="645"/>
        <end position="690"/>
    </location>
</feature>
<feature type="compositionally biased region" description="Basic and acidic residues" evidence="3">
    <location>
        <begin position="700"/>
        <end position="733"/>
    </location>
</feature>
<reference key="1">
    <citation type="journal article" date="1994" name="Plant Cell">
        <title>Plant homeodomain protein involved in transcriptional regulation of a pathogen defense-related gene.</title>
        <authorList>
            <person name="Korfhage U."/>
            <person name="Trezzini G.F."/>
            <person name="Meier I."/>
            <person name="Hahlbrock K."/>
            <person name="Somssich I.E."/>
        </authorList>
    </citation>
    <scope>NUCLEOTIDE SEQUENCE [MRNA]</scope>
    <source>
        <strain>cv. Columbia</strain>
    </source>
</reference>
<reference key="2">
    <citation type="journal article" date="1997" name="Plant J.">
        <title>Developmental and auxin-induced expression of the Arabidopsis prha homeobox gene.</title>
        <authorList>
            <person name="Plesch G."/>
            <person name="Stoermann K."/>
            <person name="Tovar Torres J."/>
            <person name="Walden R."/>
            <person name="Somssich I.E."/>
        </authorList>
    </citation>
    <scope>NUCLEOTIDE SEQUENCE [GENOMIC DNA]</scope>
    <source>
        <strain>cv. Columbia</strain>
    </source>
</reference>
<reference key="3">
    <citation type="journal article" date="1999" name="Nature">
        <title>Sequence and analysis of chromosome 4 of the plant Arabidopsis thaliana.</title>
        <authorList>
            <person name="Mayer K.F.X."/>
            <person name="Schueller C."/>
            <person name="Wambutt R."/>
            <person name="Murphy G."/>
            <person name="Volckaert G."/>
            <person name="Pohl T."/>
            <person name="Duesterhoeft A."/>
            <person name="Stiekema W."/>
            <person name="Entian K.-D."/>
            <person name="Terryn N."/>
            <person name="Harris B."/>
            <person name="Ansorge W."/>
            <person name="Brandt P."/>
            <person name="Grivell L.A."/>
            <person name="Rieger M."/>
            <person name="Weichselgartner M."/>
            <person name="de Simone V."/>
            <person name="Obermaier B."/>
            <person name="Mache R."/>
            <person name="Mueller M."/>
            <person name="Kreis M."/>
            <person name="Delseny M."/>
            <person name="Puigdomenech P."/>
            <person name="Watson M."/>
            <person name="Schmidtheini T."/>
            <person name="Reichert B."/>
            <person name="Portetelle D."/>
            <person name="Perez-Alonso M."/>
            <person name="Boutry M."/>
            <person name="Bancroft I."/>
            <person name="Vos P."/>
            <person name="Hoheisel J."/>
            <person name="Zimmermann W."/>
            <person name="Wedler H."/>
            <person name="Ridley P."/>
            <person name="Langham S.-A."/>
            <person name="McCullagh B."/>
            <person name="Bilham L."/>
            <person name="Robben J."/>
            <person name="van der Schueren J."/>
            <person name="Grymonprez B."/>
            <person name="Chuang Y.-J."/>
            <person name="Vandenbussche F."/>
            <person name="Braeken M."/>
            <person name="Weltjens I."/>
            <person name="Voet M."/>
            <person name="Bastiaens I."/>
            <person name="Aert R."/>
            <person name="Defoor E."/>
            <person name="Weitzenegger T."/>
            <person name="Bothe G."/>
            <person name="Ramsperger U."/>
            <person name="Hilbert H."/>
            <person name="Braun M."/>
            <person name="Holzer E."/>
            <person name="Brandt A."/>
            <person name="Peters S."/>
            <person name="van Staveren M."/>
            <person name="Dirkse W."/>
            <person name="Mooijman P."/>
            <person name="Klein Lankhorst R."/>
            <person name="Rose M."/>
            <person name="Hauf J."/>
            <person name="Koetter P."/>
            <person name="Berneiser S."/>
            <person name="Hempel S."/>
            <person name="Feldpausch M."/>
            <person name="Lamberth S."/>
            <person name="Van den Daele H."/>
            <person name="De Keyser A."/>
            <person name="Buysshaert C."/>
            <person name="Gielen J."/>
            <person name="Villarroel R."/>
            <person name="De Clercq R."/>
            <person name="van Montagu M."/>
            <person name="Rogers J."/>
            <person name="Cronin A."/>
            <person name="Quail M.A."/>
            <person name="Bray-Allen S."/>
            <person name="Clark L."/>
            <person name="Doggett J."/>
            <person name="Hall S."/>
            <person name="Kay M."/>
            <person name="Lennard N."/>
            <person name="McLay K."/>
            <person name="Mayes R."/>
            <person name="Pettett A."/>
            <person name="Rajandream M.A."/>
            <person name="Lyne M."/>
            <person name="Benes V."/>
            <person name="Rechmann S."/>
            <person name="Borkova D."/>
            <person name="Bloecker H."/>
            <person name="Scharfe M."/>
            <person name="Grimm M."/>
            <person name="Loehnert T.-H."/>
            <person name="Dose S."/>
            <person name="de Haan M."/>
            <person name="Maarse A.C."/>
            <person name="Schaefer M."/>
            <person name="Mueller-Auer S."/>
            <person name="Gabel C."/>
            <person name="Fuchs M."/>
            <person name="Fartmann B."/>
            <person name="Granderath K."/>
            <person name="Dauner D."/>
            <person name="Herzl A."/>
            <person name="Neumann S."/>
            <person name="Argiriou A."/>
            <person name="Vitale D."/>
            <person name="Liguori R."/>
            <person name="Piravandi E."/>
            <person name="Massenet O."/>
            <person name="Quigley F."/>
            <person name="Clabauld G."/>
            <person name="Muendlein A."/>
            <person name="Felber R."/>
            <person name="Schnabl S."/>
            <person name="Hiller R."/>
            <person name="Schmidt W."/>
            <person name="Lecharny A."/>
            <person name="Aubourg S."/>
            <person name="Chefdor F."/>
            <person name="Cooke R."/>
            <person name="Berger C."/>
            <person name="Monfort A."/>
            <person name="Casacuberta E."/>
            <person name="Gibbons T."/>
            <person name="Weber N."/>
            <person name="Vandenbol M."/>
            <person name="Bargues M."/>
            <person name="Terol J."/>
            <person name="Torres A."/>
            <person name="Perez-Perez A."/>
            <person name="Purnelle B."/>
            <person name="Bent E."/>
            <person name="Johnson S."/>
            <person name="Tacon D."/>
            <person name="Jesse T."/>
            <person name="Heijnen L."/>
            <person name="Schwarz S."/>
            <person name="Scholler P."/>
            <person name="Heber S."/>
            <person name="Francs P."/>
            <person name="Bielke C."/>
            <person name="Frishman D."/>
            <person name="Haase D."/>
            <person name="Lemcke K."/>
            <person name="Mewes H.-W."/>
            <person name="Stocker S."/>
            <person name="Zaccaria P."/>
            <person name="Bevan M."/>
            <person name="Wilson R.K."/>
            <person name="de la Bastide M."/>
            <person name="Habermann K."/>
            <person name="Parnell L."/>
            <person name="Dedhia N."/>
            <person name="Gnoj L."/>
            <person name="Schutz K."/>
            <person name="Huang E."/>
            <person name="Spiegel L."/>
            <person name="Sekhon M."/>
            <person name="Murray J."/>
            <person name="Sheet P."/>
            <person name="Cordes M."/>
            <person name="Abu-Threideh J."/>
            <person name="Stoneking T."/>
            <person name="Kalicki J."/>
            <person name="Graves T."/>
            <person name="Harmon G."/>
            <person name="Edwards J."/>
            <person name="Latreille P."/>
            <person name="Courtney L."/>
            <person name="Cloud J."/>
            <person name="Abbott A."/>
            <person name="Scott K."/>
            <person name="Johnson D."/>
            <person name="Minx P."/>
            <person name="Bentley D."/>
            <person name="Fulton B."/>
            <person name="Miller N."/>
            <person name="Greco T."/>
            <person name="Kemp K."/>
            <person name="Kramer J."/>
            <person name="Fulton L."/>
            <person name="Mardis E."/>
            <person name="Dante M."/>
            <person name="Pepin K."/>
            <person name="Hillier L.W."/>
            <person name="Nelson J."/>
            <person name="Spieth J."/>
            <person name="Ryan E."/>
            <person name="Andrews S."/>
            <person name="Geisel C."/>
            <person name="Layman D."/>
            <person name="Du H."/>
            <person name="Ali J."/>
            <person name="Berghoff A."/>
            <person name="Jones K."/>
            <person name="Drone K."/>
            <person name="Cotton M."/>
            <person name="Joshu C."/>
            <person name="Antonoiu B."/>
            <person name="Zidanic M."/>
            <person name="Strong C."/>
            <person name="Sun H."/>
            <person name="Lamar B."/>
            <person name="Yordan C."/>
            <person name="Ma P."/>
            <person name="Zhong J."/>
            <person name="Preston R."/>
            <person name="Vil D."/>
            <person name="Shekher M."/>
            <person name="Matero A."/>
            <person name="Shah R."/>
            <person name="Swaby I.K."/>
            <person name="O'Shaughnessy A."/>
            <person name="Rodriguez M."/>
            <person name="Hoffman J."/>
            <person name="Till S."/>
            <person name="Granat S."/>
            <person name="Shohdy N."/>
            <person name="Hasegawa A."/>
            <person name="Hameed A."/>
            <person name="Lodhi M."/>
            <person name="Johnson A."/>
            <person name="Chen E."/>
            <person name="Marra M.A."/>
            <person name="Martienssen R."/>
            <person name="McCombie W.R."/>
        </authorList>
    </citation>
    <scope>NUCLEOTIDE SEQUENCE [LARGE SCALE GENOMIC DNA]</scope>
    <source>
        <strain>cv. Columbia</strain>
    </source>
</reference>
<reference key="4">
    <citation type="journal article" date="2017" name="Plant J.">
        <title>Araport11: a complete reannotation of the Arabidopsis thaliana reference genome.</title>
        <authorList>
            <person name="Cheng C.Y."/>
            <person name="Krishnakumar V."/>
            <person name="Chan A.P."/>
            <person name="Thibaud-Nissen F."/>
            <person name="Schobel S."/>
            <person name="Town C.D."/>
        </authorList>
    </citation>
    <scope>GENOME REANNOTATION</scope>
    <source>
        <strain>cv. Columbia</strain>
    </source>
</reference>
<proteinExistence type="evidence at transcript level"/>
<organism>
    <name type="scientific">Arabidopsis thaliana</name>
    <name type="common">Mouse-ear cress</name>
    <dbReference type="NCBI Taxonomy" id="3702"/>
    <lineage>
        <taxon>Eukaryota</taxon>
        <taxon>Viridiplantae</taxon>
        <taxon>Streptophyta</taxon>
        <taxon>Embryophyta</taxon>
        <taxon>Tracheophyta</taxon>
        <taxon>Spermatophyta</taxon>
        <taxon>Magnoliopsida</taxon>
        <taxon>eudicotyledons</taxon>
        <taxon>Gunneridae</taxon>
        <taxon>Pentapetalae</taxon>
        <taxon>rosids</taxon>
        <taxon>malvids</taxon>
        <taxon>Brassicales</taxon>
        <taxon>Brassicaceae</taxon>
        <taxon>Camelineae</taxon>
        <taxon>Arabidopsis</taxon>
    </lineage>
</organism>
<name>PRH_ARATH</name>
<evidence type="ECO:0000255" key="1">
    <source>
        <dbReference type="PROSITE-ProRule" id="PRU00108"/>
    </source>
</evidence>
<evidence type="ECO:0000255" key="2">
    <source>
        <dbReference type="PROSITE-ProRule" id="PRU00146"/>
    </source>
</evidence>
<evidence type="ECO:0000256" key="3">
    <source>
        <dbReference type="SAM" id="MobiDB-lite"/>
    </source>
</evidence>
<evidence type="ECO:0000305" key="4"/>
<dbReference type="EMBL" id="L21991">
    <property type="protein sequence ID" value="AAA32843.1"/>
    <property type="molecule type" value="mRNA"/>
</dbReference>
<dbReference type="EMBL" id="U48864">
    <property type="protein sequence ID" value="AAC49836.1"/>
    <property type="molecule type" value="Genomic_DNA"/>
</dbReference>
<dbReference type="EMBL" id="AL050352">
    <property type="protein sequence ID" value="CAB43669.1"/>
    <property type="molecule type" value="Genomic_DNA"/>
</dbReference>
<dbReference type="EMBL" id="AL161575">
    <property type="protein sequence ID" value="CAB79752.1"/>
    <property type="molecule type" value="Genomic_DNA"/>
</dbReference>
<dbReference type="EMBL" id="CP002687">
    <property type="protein sequence ID" value="AEE85698.1"/>
    <property type="molecule type" value="Genomic_DNA"/>
</dbReference>
<dbReference type="PIR" id="T08555">
    <property type="entry name" value="T08555"/>
</dbReference>
<dbReference type="RefSeq" id="NP_194723.1">
    <molecule id="P48785-1"/>
    <property type="nucleotide sequence ID" value="NM_119140.2"/>
</dbReference>
<dbReference type="SMR" id="P48785"/>
<dbReference type="FunCoup" id="P48785">
    <property type="interactions" value="1022"/>
</dbReference>
<dbReference type="IntAct" id="P48785">
    <property type="interactions" value="1"/>
</dbReference>
<dbReference type="STRING" id="3702.P48785"/>
<dbReference type="iPTMnet" id="P48785"/>
<dbReference type="PaxDb" id="3702-AT4G29940.1"/>
<dbReference type="ProteomicsDB" id="234841">
    <molecule id="P48785-1"/>
</dbReference>
<dbReference type="EnsemblPlants" id="AT4G29940.1">
    <molecule id="P48785-1"/>
    <property type="protein sequence ID" value="AT4G29940.1"/>
    <property type="gene ID" value="AT4G29940"/>
</dbReference>
<dbReference type="GeneID" id="829117"/>
<dbReference type="Gramene" id="AT4G29940.1">
    <molecule id="P48785-1"/>
    <property type="protein sequence ID" value="AT4G29940.1"/>
    <property type="gene ID" value="AT4G29940"/>
</dbReference>
<dbReference type="KEGG" id="ath:AT4G29940"/>
<dbReference type="Araport" id="AT4G29940"/>
<dbReference type="TAIR" id="AT4G29940">
    <property type="gene designation" value="PRHA"/>
</dbReference>
<dbReference type="eggNOG" id="KOG4299">
    <property type="taxonomic scope" value="Eukaryota"/>
</dbReference>
<dbReference type="InParanoid" id="P48785"/>
<dbReference type="OMA" id="MEINEIH"/>
<dbReference type="PhylomeDB" id="P48785"/>
<dbReference type="PRO" id="PR:P48785"/>
<dbReference type="Proteomes" id="UP000006548">
    <property type="component" value="Chromosome 4"/>
</dbReference>
<dbReference type="ExpressionAtlas" id="P48785">
    <property type="expression patterns" value="baseline and differential"/>
</dbReference>
<dbReference type="GO" id="GO:0005634">
    <property type="term" value="C:nucleus"/>
    <property type="evidence" value="ECO:0007669"/>
    <property type="project" value="UniProtKB-SubCell"/>
</dbReference>
<dbReference type="GO" id="GO:0003700">
    <property type="term" value="F:DNA-binding transcription factor activity"/>
    <property type="evidence" value="ECO:0000250"/>
    <property type="project" value="TAIR"/>
</dbReference>
<dbReference type="GO" id="GO:0043565">
    <property type="term" value="F:sequence-specific DNA binding"/>
    <property type="evidence" value="ECO:0000314"/>
    <property type="project" value="TAIR"/>
</dbReference>
<dbReference type="GO" id="GO:0008270">
    <property type="term" value="F:zinc ion binding"/>
    <property type="evidence" value="ECO:0007669"/>
    <property type="project" value="UniProtKB-KW"/>
</dbReference>
<dbReference type="GO" id="GO:0006952">
    <property type="term" value="P:defense response"/>
    <property type="evidence" value="ECO:0007669"/>
    <property type="project" value="UniProtKB-KW"/>
</dbReference>
<dbReference type="GO" id="GO:0045893">
    <property type="term" value="P:positive regulation of DNA-templated transcription"/>
    <property type="evidence" value="ECO:0000314"/>
    <property type="project" value="TAIR"/>
</dbReference>
<dbReference type="GO" id="GO:0009733">
    <property type="term" value="P:response to auxin"/>
    <property type="evidence" value="ECO:0000270"/>
    <property type="project" value="TAIR"/>
</dbReference>
<dbReference type="CDD" id="cd00086">
    <property type="entry name" value="homeodomain"/>
    <property type="match status" value="1"/>
</dbReference>
<dbReference type="CDD" id="cd15504">
    <property type="entry name" value="PHD_PRHA_like"/>
    <property type="match status" value="1"/>
</dbReference>
<dbReference type="FunFam" id="1.10.10.60:FF:000568">
    <property type="entry name" value="Pathogenesis-related homeodomain protein"/>
    <property type="match status" value="1"/>
</dbReference>
<dbReference type="FunFam" id="3.30.40.10:FF:000270">
    <property type="entry name" value="pathogenesis-related homeodomain protein-like"/>
    <property type="match status" value="1"/>
</dbReference>
<dbReference type="Gene3D" id="1.10.10.60">
    <property type="entry name" value="Homeodomain-like"/>
    <property type="match status" value="1"/>
</dbReference>
<dbReference type="Gene3D" id="3.30.40.10">
    <property type="entry name" value="Zinc/RING finger domain, C3HC4 (zinc finger)"/>
    <property type="match status" value="1"/>
</dbReference>
<dbReference type="InterPro" id="IPR001356">
    <property type="entry name" value="HD"/>
</dbReference>
<dbReference type="InterPro" id="IPR009057">
    <property type="entry name" value="Homeodomain-like_sf"/>
</dbReference>
<dbReference type="InterPro" id="IPR045876">
    <property type="entry name" value="PRHA-like_PHD-finger"/>
</dbReference>
<dbReference type="InterPro" id="IPR019786">
    <property type="entry name" value="Zinc_finger_PHD-type_CS"/>
</dbReference>
<dbReference type="InterPro" id="IPR011011">
    <property type="entry name" value="Znf_FYVE_PHD"/>
</dbReference>
<dbReference type="InterPro" id="IPR001965">
    <property type="entry name" value="Znf_PHD"/>
</dbReference>
<dbReference type="InterPro" id="IPR019787">
    <property type="entry name" value="Znf_PHD-finger"/>
</dbReference>
<dbReference type="InterPro" id="IPR013083">
    <property type="entry name" value="Znf_RING/FYVE/PHD"/>
</dbReference>
<dbReference type="PANTHER" id="PTHR12628:SF10">
    <property type="entry name" value="HOMEOBOX DOMAIN-CONTAINING PROTEIN"/>
    <property type="match status" value="1"/>
</dbReference>
<dbReference type="PANTHER" id="PTHR12628">
    <property type="entry name" value="POLYCOMB-LIKE TRANSCRIPTION FACTOR"/>
    <property type="match status" value="1"/>
</dbReference>
<dbReference type="Pfam" id="PF00046">
    <property type="entry name" value="Homeodomain"/>
    <property type="match status" value="1"/>
</dbReference>
<dbReference type="Pfam" id="PF00628">
    <property type="entry name" value="PHD"/>
    <property type="match status" value="1"/>
</dbReference>
<dbReference type="SMART" id="SM00389">
    <property type="entry name" value="HOX"/>
    <property type="match status" value="1"/>
</dbReference>
<dbReference type="SMART" id="SM00249">
    <property type="entry name" value="PHD"/>
    <property type="match status" value="1"/>
</dbReference>
<dbReference type="SUPFAM" id="SSF57903">
    <property type="entry name" value="FYVE/PHD zinc finger"/>
    <property type="match status" value="1"/>
</dbReference>
<dbReference type="SUPFAM" id="SSF46689">
    <property type="entry name" value="Homeodomain-like"/>
    <property type="match status" value="1"/>
</dbReference>
<dbReference type="PROSITE" id="PS50071">
    <property type="entry name" value="HOMEOBOX_2"/>
    <property type="match status" value="1"/>
</dbReference>
<dbReference type="PROSITE" id="PS01359">
    <property type="entry name" value="ZF_PHD_1"/>
    <property type="match status" value="1"/>
</dbReference>
<dbReference type="PROSITE" id="PS50016">
    <property type="entry name" value="ZF_PHD_2"/>
    <property type="match status" value="1"/>
</dbReference>
<gene>
    <name type="primary">PRH</name>
    <name type="synonym">PRHA</name>
    <name type="ordered locus">At4g29940</name>
    <name type="ORF">F27B13.180</name>
</gene>